<gene>
    <name evidence="5" type="primary">glnA</name>
    <name type="ordered locus">PYRAB16090</name>
    <name type="ORF">PAB1292</name>
</gene>
<reference key="1">
    <citation type="journal article" date="2003" name="Mol. Microbiol.">
        <title>An integrated analysis of the genome of the hyperthermophilic archaeon Pyrococcus abyssi.</title>
        <authorList>
            <person name="Cohen G.N."/>
            <person name="Barbe V."/>
            <person name="Flament D."/>
            <person name="Galperin M."/>
            <person name="Heilig R."/>
            <person name="Lecompte O."/>
            <person name="Poch O."/>
            <person name="Prieur D."/>
            <person name="Querellou J."/>
            <person name="Ripp R."/>
            <person name="Thierry J.-C."/>
            <person name="Van der Oost J."/>
            <person name="Weissenbach J."/>
            <person name="Zivanovic Y."/>
            <person name="Forterre P."/>
        </authorList>
    </citation>
    <scope>NUCLEOTIDE SEQUENCE [LARGE SCALE GENOMIC DNA]</scope>
    <source>
        <strain>GE5 / Orsay</strain>
    </source>
</reference>
<reference key="2">
    <citation type="journal article" date="2012" name="Curr. Microbiol.">
        <title>Re-annotation of two hyperthermophilic archaea Pyrococcus abyssi GE5 and Pyrococcus furiosus DSM 3638.</title>
        <authorList>
            <person name="Gao J."/>
            <person name="Wang J."/>
        </authorList>
    </citation>
    <scope>GENOME REANNOTATION</scope>
    <source>
        <strain>GE5 / Orsay</strain>
    </source>
</reference>
<dbReference type="EC" id="6.3.1.2" evidence="5"/>
<dbReference type="EMBL" id="AJ248288">
    <property type="protein sequence ID" value="CAB50513.1"/>
    <property type="molecule type" value="Genomic_DNA"/>
</dbReference>
<dbReference type="EMBL" id="HE613800">
    <property type="protein sequence ID" value="CCE71069.1"/>
    <property type="molecule type" value="Genomic_DNA"/>
</dbReference>
<dbReference type="PIR" id="C75009">
    <property type="entry name" value="C75009"/>
</dbReference>
<dbReference type="RefSeq" id="WP_010868727.1">
    <property type="nucleotide sequence ID" value="NC_000868.1"/>
</dbReference>
<dbReference type="SMR" id="Q9UY99"/>
<dbReference type="STRING" id="272844.PAB1292"/>
<dbReference type="KEGG" id="pab:PAB1292"/>
<dbReference type="PATRIC" id="fig|272844.11.peg.1718"/>
<dbReference type="eggNOG" id="arCOG01909">
    <property type="taxonomic scope" value="Archaea"/>
</dbReference>
<dbReference type="HOGENOM" id="CLU_017290_1_3_2"/>
<dbReference type="OrthoDB" id="36124at2157"/>
<dbReference type="PhylomeDB" id="Q9UY99"/>
<dbReference type="Proteomes" id="UP000000810">
    <property type="component" value="Chromosome"/>
</dbReference>
<dbReference type="Proteomes" id="UP000009139">
    <property type="component" value="Chromosome"/>
</dbReference>
<dbReference type="GO" id="GO:0005737">
    <property type="term" value="C:cytoplasm"/>
    <property type="evidence" value="ECO:0007669"/>
    <property type="project" value="UniProtKB-SubCell"/>
</dbReference>
<dbReference type="GO" id="GO:0005524">
    <property type="term" value="F:ATP binding"/>
    <property type="evidence" value="ECO:0007669"/>
    <property type="project" value="UniProtKB-KW"/>
</dbReference>
<dbReference type="GO" id="GO:0004356">
    <property type="term" value="F:glutamine synthetase activity"/>
    <property type="evidence" value="ECO:0007669"/>
    <property type="project" value="UniProtKB-EC"/>
</dbReference>
<dbReference type="GO" id="GO:0046872">
    <property type="term" value="F:metal ion binding"/>
    <property type="evidence" value="ECO:0007669"/>
    <property type="project" value="UniProtKB-KW"/>
</dbReference>
<dbReference type="GO" id="GO:0006542">
    <property type="term" value="P:glutamine biosynthetic process"/>
    <property type="evidence" value="ECO:0007669"/>
    <property type="project" value="InterPro"/>
</dbReference>
<dbReference type="FunFam" id="3.30.590.10:FF:000003">
    <property type="entry name" value="Glutamine synthetase 2"/>
    <property type="match status" value="1"/>
</dbReference>
<dbReference type="Gene3D" id="3.10.20.70">
    <property type="entry name" value="Glutamine synthetase, N-terminal domain"/>
    <property type="match status" value="1"/>
</dbReference>
<dbReference type="Gene3D" id="3.30.590.10">
    <property type="entry name" value="Glutamine synthetase/guanido kinase, catalytic domain"/>
    <property type="match status" value="1"/>
</dbReference>
<dbReference type="InterPro" id="IPR008147">
    <property type="entry name" value="Gln_synt_N"/>
</dbReference>
<dbReference type="InterPro" id="IPR036651">
    <property type="entry name" value="Gln_synt_N_sf"/>
</dbReference>
<dbReference type="InterPro" id="IPR014746">
    <property type="entry name" value="Gln_synth/guanido_kin_cat_dom"/>
</dbReference>
<dbReference type="InterPro" id="IPR008146">
    <property type="entry name" value="Gln_synth_cat_dom"/>
</dbReference>
<dbReference type="InterPro" id="IPR027303">
    <property type="entry name" value="Gln_synth_gly_rich_site"/>
</dbReference>
<dbReference type="InterPro" id="IPR004809">
    <property type="entry name" value="Gln_synth_I"/>
</dbReference>
<dbReference type="InterPro" id="IPR027302">
    <property type="entry name" value="Gln_synth_N_conserv_site"/>
</dbReference>
<dbReference type="NCBIfam" id="TIGR00653">
    <property type="entry name" value="GlnA"/>
    <property type="match status" value="1"/>
</dbReference>
<dbReference type="PANTHER" id="PTHR43785">
    <property type="entry name" value="GAMMA-GLUTAMYLPUTRESCINE SYNTHETASE"/>
    <property type="match status" value="1"/>
</dbReference>
<dbReference type="PANTHER" id="PTHR43785:SF12">
    <property type="entry name" value="TYPE-1 GLUTAMINE SYNTHETASE 2"/>
    <property type="match status" value="1"/>
</dbReference>
<dbReference type="Pfam" id="PF00120">
    <property type="entry name" value="Gln-synt_C"/>
    <property type="match status" value="1"/>
</dbReference>
<dbReference type="Pfam" id="PF03951">
    <property type="entry name" value="Gln-synt_N"/>
    <property type="match status" value="1"/>
</dbReference>
<dbReference type="SMART" id="SM01230">
    <property type="entry name" value="Gln-synt_C"/>
    <property type="match status" value="1"/>
</dbReference>
<dbReference type="SUPFAM" id="SSF54368">
    <property type="entry name" value="Glutamine synthetase, N-terminal domain"/>
    <property type="match status" value="1"/>
</dbReference>
<dbReference type="SUPFAM" id="SSF55931">
    <property type="entry name" value="Glutamine synthetase/guanido kinase"/>
    <property type="match status" value="1"/>
</dbReference>
<dbReference type="PROSITE" id="PS00180">
    <property type="entry name" value="GLNA_1"/>
    <property type="match status" value="1"/>
</dbReference>
<dbReference type="PROSITE" id="PS00181">
    <property type="entry name" value="GLNA_ATP"/>
    <property type="match status" value="1"/>
</dbReference>
<dbReference type="PROSITE" id="PS51986">
    <property type="entry name" value="GS_BETA_GRASP"/>
    <property type="match status" value="1"/>
</dbReference>
<dbReference type="PROSITE" id="PS51987">
    <property type="entry name" value="GS_CATALYTIC"/>
    <property type="match status" value="1"/>
</dbReference>
<name>GLNA_PYRAB</name>
<accession>Q9UY99</accession>
<accession>G8ZJW2</accession>
<feature type="chain" id="PRO_0000153208" description="Glutamine synthetase">
    <location>
        <begin position="1"/>
        <end position="439"/>
    </location>
</feature>
<feature type="domain" description="GS beta-grasp" evidence="6">
    <location>
        <begin position="12"/>
        <end position="93"/>
    </location>
</feature>
<feature type="domain" description="GS catalytic" evidence="7">
    <location>
        <begin position="99"/>
        <end position="439"/>
    </location>
</feature>
<feature type="binding site" evidence="4">
    <location>
        <position position="122"/>
    </location>
    <ligand>
        <name>Mg(2+)</name>
        <dbReference type="ChEBI" id="CHEBI:18420"/>
        <label>1</label>
    </ligand>
</feature>
<feature type="binding site" evidence="4">
    <location>
        <position position="124"/>
    </location>
    <ligand>
        <name>Mg(2+)</name>
        <dbReference type="ChEBI" id="CHEBI:18420"/>
        <label>2</label>
    </ligand>
</feature>
<feature type="binding site" evidence="4">
    <location>
        <position position="172"/>
    </location>
    <ligand>
        <name>ATP</name>
        <dbReference type="ChEBI" id="CHEBI:30616"/>
    </ligand>
</feature>
<feature type="binding site" evidence="4">
    <location>
        <position position="177"/>
    </location>
    <ligand>
        <name>Mg(2+)</name>
        <dbReference type="ChEBI" id="CHEBI:18420"/>
        <label>2</label>
    </ligand>
</feature>
<feature type="binding site" evidence="4">
    <location>
        <position position="184"/>
    </location>
    <ligand>
        <name>Mg(2+)</name>
        <dbReference type="ChEBI" id="CHEBI:18420"/>
        <label>2</label>
    </ligand>
</feature>
<feature type="binding site" evidence="2">
    <location>
        <position position="229"/>
    </location>
    <ligand>
        <name>L-glutamate</name>
        <dbReference type="ChEBI" id="CHEBI:29985"/>
    </ligand>
</feature>
<feature type="binding site" evidence="4">
    <location>
        <position position="233"/>
    </location>
    <ligand>
        <name>Mg(2+)</name>
        <dbReference type="ChEBI" id="CHEBI:18420"/>
        <label>1</label>
    </ligand>
</feature>
<feature type="binding site" evidence="4">
    <location>
        <begin position="235"/>
        <end position="237"/>
    </location>
    <ligand>
        <name>ATP</name>
        <dbReference type="ChEBI" id="CHEBI:30616"/>
    </ligand>
</feature>
<feature type="binding site" evidence="3">
    <location>
        <position position="237"/>
    </location>
    <ligand>
        <name>ATP</name>
        <dbReference type="ChEBI" id="CHEBI:30616"/>
    </ligand>
</feature>
<feature type="binding site" evidence="4">
    <location>
        <position position="283"/>
    </location>
    <ligand>
        <name>L-glutamate</name>
        <dbReference type="ChEBI" id="CHEBI:29985"/>
    </ligand>
</feature>
<feature type="binding site" evidence="1">
    <location>
        <position position="289"/>
    </location>
    <ligand>
        <name>L-glutamate</name>
        <dbReference type="ChEBI" id="CHEBI:29985"/>
    </ligand>
</feature>
<feature type="binding site" evidence="4">
    <location>
        <position position="301"/>
    </location>
    <ligand>
        <name>ATP</name>
        <dbReference type="ChEBI" id="CHEBI:30616"/>
    </ligand>
</feature>
<feature type="binding site" evidence="4">
    <location>
        <position position="301"/>
    </location>
    <ligand>
        <name>L-glutamate</name>
        <dbReference type="ChEBI" id="CHEBI:29985"/>
    </ligand>
</feature>
<feature type="binding site" evidence="4">
    <location>
        <position position="306"/>
    </location>
    <ligand>
        <name>ATP</name>
        <dbReference type="ChEBI" id="CHEBI:30616"/>
    </ligand>
</feature>
<feature type="binding site" evidence="4">
    <location>
        <position position="318"/>
    </location>
    <ligand>
        <name>Mg(2+)</name>
        <dbReference type="ChEBI" id="CHEBI:18420"/>
        <label>1</label>
    </ligand>
</feature>
<feature type="binding site" evidence="4">
    <location>
        <position position="320"/>
    </location>
    <ligand>
        <name>L-glutamate</name>
        <dbReference type="ChEBI" id="CHEBI:29985"/>
    </ligand>
</feature>
<keyword id="KW-0067">ATP-binding</keyword>
<keyword id="KW-0963">Cytoplasm</keyword>
<keyword id="KW-0436">Ligase</keyword>
<keyword id="KW-0460">Magnesium</keyword>
<keyword id="KW-0479">Metal-binding</keyword>
<keyword id="KW-0547">Nucleotide-binding</keyword>
<protein>
    <recommendedName>
        <fullName evidence="5">Glutamine synthetase</fullName>
        <shortName evidence="5">GS</shortName>
        <ecNumber evidence="5">6.3.1.2</ecNumber>
    </recommendedName>
    <alternativeName>
        <fullName evidence="5">Glutamate--ammonia ligase</fullName>
    </alternativeName>
    <alternativeName>
        <fullName evidence="5">Glutamine synthetase I alpha</fullName>
        <shortName evidence="5">GSI alpha</shortName>
    </alternativeName>
</protein>
<comment type="function">
    <text evidence="5">Probably involved in nitrogen metabolism via ammonium assimilation. Catalyzes the ATP-dependent biosynthesis of glutamine from glutamate and ammonia.</text>
</comment>
<comment type="catalytic activity">
    <reaction evidence="5">
        <text>L-glutamate + NH4(+) + ATP = L-glutamine + ADP + phosphate + H(+)</text>
        <dbReference type="Rhea" id="RHEA:16169"/>
        <dbReference type="ChEBI" id="CHEBI:15378"/>
        <dbReference type="ChEBI" id="CHEBI:28938"/>
        <dbReference type="ChEBI" id="CHEBI:29985"/>
        <dbReference type="ChEBI" id="CHEBI:30616"/>
        <dbReference type="ChEBI" id="CHEBI:43474"/>
        <dbReference type="ChEBI" id="CHEBI:58359"/>
        <dbReference type="ChEBI" id="CHEBI:456216"/>
        <dbReference type="EC" id="6.3.1.2"/>
    </reaction>
</comment>
<comment type="cofactor">
    <cofactor evidence="5">
        <name>Mg(2+)</name>
        <dbReference type="ChEBI" id="CHEBI:18420"/>
    </cofactor>
    <text evidence="4">Binds 2 Mg(2+) ions per subunit.</text>
</comment>
<comment type="subunit">
    <text evidence="5">Oligomer of 12 subunits arranged in the form of two hexagons.</text>
</comment>
<comment type="subcellular location">
    <subcellularLocation>
        <location evidence="5">Cytoplasm</location>
    </subcellularLocation>
</comment>
<comment type="similarity">
    <text evidence="5">Belongs to the glutamine synthetase family.</text>
</comment>
<sequence length="439" mass="49743">MNVSEVKSGATRSPKFVQLIFVDINGMPKGMEIPASRLQEAIEDGISFDGSSVPGFQGIEDSDLIFKADPDTYVEVPWDNVARVYGYIYKDGKPYGADPRGVLKRVIEKLAEMGIKAYIGPEPEFYLFKKNGSWELEIPDVGGYFDILTLDKAKDIKREIAEYMPSFGLVPEVLHHEVGKAQHEIDFRYDEALKTADNIISFKYIVKAVAEVHGLYATFMPKPIYGMPGNGMHLHISLWKEGENIFKGEEGLSETALHFIGGLLKHAKALTAITNPTVNSYKRLVPGYEAPVYISWGYKNRSALIRVPAFWGNGARIEYRCPDPSANPYFAFAAILMAGLDGIKHKVEPFAYVEENVYEMDEGKRKELGIDTLPGSLGEALDELEKDKVVREALGEAYKNFIEYKRKEWESYLEYLEAKHLPKDTKRVTEWELERYFFI</sequence>
<organism>
    <name type="scientific">Pyrococcus abyssi (strain GE5 / Orsay)</name>
    <dbReference type="NCBI Taxonomy" id="272844"/>
    <lineage>
        <taxon>Archaea</taxon>
        <taxon>Methanobacteriati</taxon>
        <taxon>Methanobacteriota</taxon>
        <taxon>Thermococci</taxon>
        <taxon>Thermococcales</taxon>
        <taxon>Thermococcaceae</taxon>
        <taxon>Pyrococcus</taxon>
    </lineage>
</organism>
<evidence type="ECO:0000250" key="1">
    <source>
        <dbReference type="UniProtKB" id="P0A1P6"/>
    </source>
</evidence>
<evidence type="ECO:0000250" key="2">
    <source>
        <dbReference type="UniProtKB" id="P12425"/>
    </source>
</evidence>
<evidence type="ECO:0000250" key="3">
    <source>
        <dbReference type="UniProtKB" id="P77961"/>
    </source>
</evidence>
<evidence type="ECO:0000250" key="4">
    <source>
        <dbReference type="UniProtKB" id="P9WN39"/>
    </source>
</evidence>
<evidence type="ECO:0000250" key="5">
    <source>
        <dbReference type="UniProtKB" id="Q9HH09"/>
    </source>
</evidence>
<evidence type="ECO:0000255" key="6">
    <source>
        <dbReference type="PROSITE-ProRule" id="PRU01330"/>
    </source>
</evidence>
<evidence type="ECO:0000255" key="7">
    <source>
        <dbReference type="PROSITE-ProRule" id="PRU01331"/>
    </source>
</evidence>
<proteinExistence type="inferred from homology"/>